<accession>B4TVT9</accession>
<evidence type="ECO:0000255" key="1">
    <source>
        <dbReference type="HAMAP-Rule" id="MF_01006"/>
    </source>
</evidence>
<protein>
    <recommendedName>
        <fullName evidence="1">Undecaprenyl-diphosphatase</fullName>
        <ecNumber evidence="1">3.6.1.27</ecNumber>
    </recommendedName>
    <alternativeName>
        <fullName evidence="1">Bacitracin resistance protein</fullName>
    </alternativeName>
    <alternativeName>
        <fullName evidence="1">Undecaprenyl pyrophosphate phosphatase</fullName>
    </alternativeName>
</protein>
<keyword id="KW-0046">Antibiotic resistance</keyword>
<keyword id="KW-0997">Cell inner membrane</keyword>
<keyword id="KW-1003">Cell membrane</keyword>
<keyword id="KW-0133">Cell shape</keyword>
<keyword id="KW-0961">Cell wall biogenesis/degradation</keyword>
<keyword id="KW-0378">Hydrolase</keyword>
<keyword id="KW-0472">Membrane</keyword>
<keyword id="KW-0573">Peptidoglycan synthesis</keyword>
<keyword id="KW-0812">Transmembrane</keyword>
<keyword id="KW-1133">Transmembrane helix</keyword>
<gene>
    <name evidence="1" type="primary">uppP</name>
    <name type="ordered locus">SeSA_A3395</name>
</gene>
<comment type="function">
    <text evidence="1">Catalyzes the dephosphorylation of undecaprenyl diphosphate (UPP). Confers resistance to bacitracin.</text>
</comment>
<comment type="catalytic activity">
    <reaction evidence="1">
        <text>di-trans,octa-cis-undecaprenyl diphosphate + H2O = di-trans,octa-cis-undecaprenyl phosphate + phosphate + H(+)</text>
        <dbReference type="Rhea" id="RHEA:28094"/>
        <dbReference type="ChEBI" id="CHEBI:15377"/>
        <dbReference type="ChEBI" id="CHEBI:15378"/>
        <dbReference type="ChEBI" id="CHEBI:43474"/>
        <dbReference type="ChEBI" id="CHEBI:58405"/>
        <dbReference type="ChEBI" id="CHEBI:60392"/>
        <dbReference type="EC" id="3.6.1.27"/>
    </reaction>
</comment>
<comment type="subcellular location">
    <subcellularLocation>
        <location evidence="1">Cell inner membrane</location>
        <topology evidence="1">Multi-pass membrane protein</topology>
    </subcellularLocation>
</comment>
<comment type="miscellaneous">
    <text>Bacitracin is thought to be involved in the inhibition of peptidoglycan synthesis by sequestering undecaprenyl diphosphate, thereby reducing the pool of lipid carrier available.</text>
</comment>
<comment type="similarity">
    <text evidence="1">Belongs to the UppP family.</text>
</comment>
<proteinExistence type="inferred from homology"/>
<reference key="1">
    <citation type="journal article" date="2011" name="J. Bacteriol.">
        <title>Comparative genomics of 28 Salmonella enterica isolates: evidence for CRISPR-mediated adaptive sublineage evolution.</title>
        <authorList>
            <person name="Fricke W.F."/>
            <person name="Mammel M.K."/>
            <person name="McDermott P.F."/>
            <person name="Tartera C."/>
            <person name="White D.G."/>
            <person name="Leclerc J.E."/>
            <person name="Ravel J."/>
            <person name="Cebula T.A."/>
        </authorList>
    </citation>
    <scope>NUCLEOTIDE SEQUENCE [LARGE SCALE GENOMIC DNA]</scope>
    <source>
        <strain>CVM19633</strain>
    </source>
</reference>
<name>UPPP_SALSV</name>
<feature type="chain" id="PRO_1000197403" description="Undecaprenyl-diphosphatase">
    <location>
        <begin position="1"/>
        <end position="273"/>
    </location>
</feature>
<feature type="transmembrane region" description="Helical" evidence="1">
    <location>
        <begin position="6"/>
        <end position="26"/>
    </location>
</feature>
<feature type="transmembrane region" description="Helical" evidence="1">
    <location>
        <begin position="45"/>
        <end position="65"/>
    </location>
</feature>
<feature type="transmembrane region" description="Helical" evidence="1">
    <location>
        <begin position="90"/>
        <end position="110"/>
    </location>
</feature>
<feature type="transmembrane region" description="Helical" evidence="1">
    <location>
        <begin position="116"/>
        <end position="136"/>
    </location>
</feature>
<feature type="transmembrane region" description="Helical" evidence="1">
    <location>
        <begin position="190"/>
        <end position="210"/>
    </location>
</feature>
<feature type="transmembrane region" description="Helical" evidence="1">
    <location>
        <begin position="222"/>
        <end position="242"/>
    </location>
</feature>
<feature type="transmembrane region" description="Helical" evidence="1">
    <location>
        <begin position="252"/>
        <end position="272"/>
    </location>
</feature>
<organism>
    <name type="scientific">Salmonella schwarzengrund (strain CVM19633)</name>
    <dbReference type="NCBI Taxonomy" id="439843"/>
    <lineage>
        <taxon>Bacteria</taxon>
        <taxon>Pseudomonadati</taxon>
        <taxon>Pseudomonadota</taxon>
        <taxon>Gammaproteobacteria</taxon>
        <taxon>Enterobacterales</taxon>
        <taxon>Enterobacteriaceae</taxon>
        <taxon>Salmonella</taxon>
    </lineage>
</organism>
<sequence>MSDMHSLLIAAILGVVEGLTEFLPVSSTGHMIIVGHLLGFEGDTAKTFEVVIQLGSILAVVVMFWRRLFGLIGIHFGRPLQREGESKGRLTLIHILLGMIPAVVLGLVFHDTIKSLFNPINVMYALVVGGLLLIAAECLKPKEPRAPGLDDMTYRQAFMIGCFQCLALWPGFSRSGATISGGMLMGVSRYAASEFSFLLAVPMMMGATVLDLYKSWSFLTAADIPMFAVGFVTAFVVALIAIKTFLQLIKRISFIPFAIYRFVVAAAVYVVFF</sequence>
<dbReference type="EC" id="3.6.1.27" evidence="1"/>
<dbReference type="EMBL" id="CP001127">
    <property type="protein sequence ID" value="ACF89325.1"/>
    <property type="molecule type" value="Genomic_DNA"/>
</dbReference>
<dbReference type="SMR" id="B4TVT9"/>
<dbReference type="KEGG" id="sew:SeSA_A3395"/>
<dbReference type="HOGENOM" id="CLU_060296_2_0_6"/>
<dbReference type="Proteomes" id="UP000001865">
    <property type="component" value="Chromosome"/>
</dbReference>
<dbReference type="GO" id="GO:0005886">
    <property type="term" value="C:plasma membrane"/>
    <property type="evidence" value="ECO:0007669"/>
    <property type="project" value="UniProtKB-SubCell"/>
</dbReference>
<dbReference type="GO" id="GO:0050380">
    <property type="term" value="F:undecaprenyl-diphosphatase activity"/>
    <property type="evidence" value="ECO:0007669"/>
    <property type="project" value="UniProtKB-UniRule"/>
</dbReference>
<dbReference type="GO" id="GO:0071555">
    <property type="term" value="P:cell wall organization"/>
    <property type="evidence" value="ECO:0007669"/>
    <property type="project" value="UniProtKB-KW"/>
</dbReference>
<dbReference type="GO" id="GO:0009252">
    <property type="term" value="P:peptidoglycan biosynthetic process"/>
    <property type="evidence" value="ECO:0007669"/>
    <property type="project" value="UniProtKB-KW"/>
</dbReference>
<dbReference type="GO" id="GO:0008360">
    <property type="term" value="P:regulation of cell shape"/>
    <property type="evidence" value="ECO:0007669"/>
    <property type="project" value="UniProtKB-KW"/>
</dbReference>
<dbReference type="GO" id="GO:0046677">
    <property type="term" value="P:response to antibiotic"/>
    <property type="evidence" value="ECO:0007669"/>
    <property type="project" value="UniProtKB-UniRule"/>
</dbReference>
<dbReference type="HAMAP" id="MF_01006">
    <property type="entry name" value="Undec_diphosphatase"/>
    <property type="match status" value="1"/>
</dbReference>
<dbReference type="InterPro" id="IPR003824">
    <property type="entry name" value="UppP"/>
</dbReference>
<dbReference type="NCBIfam" id="NF001388">
    <property type="entry name" value="PRK00281.1-1"/>
    <property type="match status" value="1"/>
</dbReference>
<dbReference type="NCBIfam" id="NF001389">
    <property type="entry name" value="PRK00281.1-2"/>
    <property type="match status" value="1"/>
</dbReference>
<dbReference type="NCBIfam" id="NF001390">
    <property type="entry name" value="PRK00281.1-4"/>
    <property type="match status" value="1"/>
</dbReference>
<dbReference type="NCBIfam" id="TIGR00753">
    <property type="entry name" value="undec_PP_bacA"/>
    <property type="match status" value="1"/>
</dbReference>
<dbReference type="PANTHER" id="PTHR30622">
    <property type="entry name" value="UNDECAPRENYL-DIPHOSPHATASE"/>
    <property type="match status" value="1"/>
</dbReference>
<dbReference type="PANTHER" id="PTHR30622:SF3">
    <property type="entry name" value="UNDECAPRENYL-DIPHOSPHATASE"/>
    <property type="match status" value="1"/>
</dbReference>
<dbReference type="Pfam" id="PF02673">
    <property type="entry name" value="BacA"/>
    <property type="match status" value="1"/>
</dbReference>